<sequence length="248" mass="27436">MSTPFYVSPQQAMADRAEYARKGIARGRSLVVLQYADGIVFVGENPSRALHKFSEIYDRIGFAAAGKYNEYENLRIGGVRYADLRGYTYDRDDVTARGLANVYAQTLGTIFSSAAEKPYEVELVVAEVGETPEGDQIYRLPHDGSIVDEHGSVAVGGNAEQISSYLDQRHQDGMSLAEALKLAVQALSRDTNGTQREIPAERLEVAVLDRTRPQQRKFKRIVGRQLDRLLEADGATTEAESSAEEEDE</sequence>
<reference key="1">
    <citation type="journal article" date="2010" name="Mol. Plant Microbe Interact.">
        <title>Streptomyces scabies 87-22 contains a coronafacic acid-like biosynthetic cluster that contributes to plant-microbe interactions.</title>
        <authorList>
            <person name="Bignell D.R."/>
            <person name="Seipke R.F."/>
            <person name="Huguet-Tapia J.C."/>
            <person name="Chambers A.H."/>
            <person name="Parry R.J."/>
            <person name="Loria R."/>
        </authorList>
    </citation>
    <scope>NUCLEOTIDE SEQUENCE [LARGE SCALE GENOMIC DNA]</scope>
    <source>
        <strain>87.22</strain>
    </source>
</reference>
<organism>
    <name type="scientific">Streptomyces scabiei (strain 87.22)</name>
    <dbReference type="NCBI Taxonomy" id="680198"/>
    <lineage>
        <taxon>Bacteria</taxon>
        <taxon>Bacillati</taxon>
        <taxon>Actinomycetota</taxon>
        <taxon>Actinomycetes</taxon>
        <taxon>Kitasatosporales</taxon>
        <taxon>Streptomycetaceae</taxon>
        <taxon>Streptomyces</taxon>
    </lineage>
</organism>
<gene>
    <name evidence="1" type="primary">prcA</name>
    <name type="ordered locus">SCAB_73481</name>
</gene>
<feature type="chain" id="PRO_0000397178" description="Proteasome subunit alpha">
    <location>
        <begin position="1"/>
        <end position="248"/>
    </location>
</feature>
<feature type="region of interest" description="Disordered" evidence="2">
    <location>
        <begin position="229"/>
        <end position="248"/>
    </location>
</feature>
<dbReference type="EMBL" id="FN554889">
    <property type="protein sequence ID" value="CBG74333.1"/>
    <property type="molecule type" value="Genomic_DNA"/>
</dbReference>
<dbReference type="RefSeq" id="WP_013004873.1">
    <property type="nucleotide sequence ID" value="NC_013929.1"/>
</dbReference>
<dbReference type="SMR" id="C9Z4D1"/>
<dbReference type="STRING" id="680198.SCAB_73481"/>
<dbReference type="GeneID" id="24308973"/>
<dbReference type="KEGG" id="scb:SCAB_73481"/>
<dbReference type="eggNOG" id="COG0638">
    <property type="taxonomic scope" value="Bacteria"/>
</dbReference>
<dbReference type="HOGENOM" id="CLU_071031_0_0_11"/>
<dbReference type="UniPathway" id="UPA00997"/>
<dbReference type="Proteomes" id="UP000001444">
    <property type="component" value="Chromosome"/>
</dbReference>
<dbReference type="GO" id="GO:0005737">
    <property type="term" value="C:cytoplasm"/>
    <property type="evidence" value="ECO:0007669"/>
    <property type="project" value="UniProtKB-SubCell"/>
</dbReference>
<dbReference type="GO" id="GO:0019773">
    <property type="term" value="C:proteasome core complex, alpha-subunit complex"/>
    <property type="evidence" value="ECO:0007669"/>
    <property type="project" value="UniProtKB-UniRule"/>
</dbReference>
<dbReference type="GO" id="GO:0004298">
    <property type="term" value="F:threonine-type endopeptidase activity"/>
    <property type="evidence" value="ECO:0007669"/>
    <property type="project" value="InterPro"/>
</dbReference>
<dbReference type="GO" id="GO:0019941">
    <property type="term" value="P:modification-dependent protein catabolic process"/>
    <property type="evidence" value="ECO:0007669"/>
    <property type="project" value="UniProtKB-UniRule"/>
</dbReference>
<dbReference type="GO" id="GO:0010498">
    <property type="term" value="P:proteasomal protein catabolic process"/>
    <property type="evidence" value="ECO:0007669"/>
    <property type="project" value="UniProtKB-UniRule"/>
</dbReference>
<dbReference type="CDD" id="cd01906">
    <property type="entry name" value="proteasome_protease_HslV"/>
    <property type="match status" value="1"/>
</dbReference>
<dbReference type="FunFam" id="3.60.20.10:FF:000023">
    <property type="entry name" value="Proteasome subunit alpha"/>
    <property type="match status" value="1"/>
</dbReference>
<dbReference type="Gene3D" id="3.60.20.10">
    <property type="entry name" value="Glutamine Phosphoribosylpyrophosphate, subunit 1, domain 1"/>
    <property type="match status" value="1"/>
</dbReference>
<dbReference type="HAMAP" id="MF_00289_B">
    <property type="entry name" value="Proteasome_A_B"/>
    <property type="match status" value="1"/>
</dbReference>
<dbReference type="InterPro" id="IPR029055">
    <property type="entry name" value="Ntn_hydrolases_N"/>
</dbReference>
<dbReference type="InterPro" id="IPR050115">
    <property type="entry name" value="Proteasome_alpha"/>
</dbReference>
<dbReference type="InterPro" id="IPR023332">
    <property type="entry name" value="Proteasome_alpha-type"/>
</dbReference>
<dbReference type="InterPro" id="IPR022296">
    <property type="entry name" value="Proteasome_asu_bac"/>
</dbReference>
<dbReference type="InterPro" id="IPR001353">
    <property type="entry name" value="Proteasome_sua/b"/>
</dbReference>
<dbReference type="NCBIfam" id="TIGR03691">
    <property type="entry name" value="20S_bact_alpha"/>
    <property type="match status" value="1"/>
</dbReference>
<dbReference type="PANTHER" id="PTHR11599">
    <property type="entry name" value="PROTEASOME SUBUNIT ALPHA/BETA"/>
    <property type="match status" value="1"/>
</dbReference>
<dbReference type="Pfam" id="PF00227">
    <property type="entry name" value="Proteasome"/>
    <property type="match status" value="1"/>
</dbReference>
<dbReference type="SUPFAM" id="SSF56235">
    <property type="entry name" value="N-terminal nucleophile aminohydrolases (Ntn hydrolases)"/>
    <property type="match status" value="1"/>
</dbReference>
<dbReference type="PROSITE" id="PS51475">
    <property type="entry name" value="PROTEASOME_ALPHA_2"/>
    <property type="match status" value="1"/>
</dbReference>
<protein>
    <recommendedName>
        <fullName evidence="1">Proteasome subunit alpha</fullName>
    </recommendedName>
    <alternativeName>
        <fullName evidence="1">20S proteasome alpha subunit</fullName>
    </alternativeName>
    <alternativeName>
        <fullName evidence="1">Proteasome core protein PrcA</fullName>
    </alternativeName>
</protein>
<name>PSA_STRSW</name>
<evidence type="ECO:0000255" key="1">
    <source>
        <dbReference type="HAMAP-Rule" id="MF_00289"/>
    </source>
</evidence>
<evidence type="ECO:0000256" key="2">
    <source>
        <dbReference type="SAM" id="MobiDB-lite"/>
    </source>
</evidence>
<accession>C9Z4D1</accession>
<proteinExistence type="inferred from homology"/>
<comment type="function">
    <text evidence="1">Component of the proteasome core, a large protease complex with broad specificity involved in protein degradation.</text>
</comment>
<comment type="activity regulation">
    <text evidence="1">The formation of the proteasomal ATPase ARC-20S proteasome complex, likely via the docking of the C-termini of ARC into the intersubunit pockets in the alpha-rings, may trigger opening of the gate for substrate entry. Interconversion between the open-gate and close-gate conformations leads to a dynamic regulation of the 20S proteasome proteolysis activity.</text>
</comment>
<comment type="pathway">
    <text evidence="1">Protein degradation; proteasomal Pup-dependent pathway.</text>
</comment>
<comment type="subunit">
    <text evidence="1">The 20S proteasome core is composed of 14 alpha and 14 beta subunits that assemble into four stacked heptameric rings, resulting in a barrel-shaped structure. The two inner rings, each composed of seven catalytic beta subunits, are sandwiched by two outer rings, each composed of seven alpha subunits. The catalytic chamber with the active sites is on the inside of the barrel. Has a gated structure, the ends of the cylinder being occluded by the N-termini of the alpha-subunits. Is capped by the proteasome-associated ATPase, ARC.</text>
</comment>
<comment type="subcellular location">
    <subcellularLocation>
        <location evidence="1">Cytoplasm</location>
    </subcellularLocation>
</comment>
<comment type="similarity">
    <text evidence="1">Belongs to the peptidase T1A family.</text>
</comment>
<keyword id="KW-0963">Cytoplasm</keyword>
<keyword id="KW-0647">Proteasome</keyword>
<keyword id="KW-1185">Reference proteome</keyword>